<reference key="1">
    <citation type="journal article" date="2008" name="BMC Genomics">
        <title>Complete genome of Phenylobacterium zucineum - a novel facultative intracellular bacterium isolated from human erythroleukemia cell line K562.</title>
        <authorList>
            <person name="Luo Y."/>
            <person name="Xu X."/>
            <person name="Ding Z."/>
            <person name="Liu Z."/>
            <person name="Zhang B."/>
            <person name="Yan Z."/>
            <person name="Sun J."/>
            <person name="Hu S."/>
            <person name="Hu X."/>
        </authorList>
    </citation>
    <scope>NUCLEOTIDE SEQUENCE [LARGE SCALE GENOMIC DNA]</scope>
    <source>
        <strain>HLK1</strain>
    </source>
</reference>
<evidence type="ECO:0000255" key="1">
    <source>
        <dbReference type="HAMAP-Rule" id="MF_01320"/>
    </source>
</evidence>
<evidence type="ECO:0000256" key="2">
    <source>
        <dbReference type="SAM" id="MobiDB-lite"/>
    </source>
</evidence>
<evidence type="ECO:0000305" key="3"/>
<dbReference type="EMBL" id="CP000747">
    <property type="protein sequence ID" value="ACG77647.1"/>
    <property type="molecule type" value="Genomic_DNA"/>
</dbReference>
<dbReference type="RefSeq" id="WP_012521791.1">
    <property type="nucleotide sequence ID" value="NC_011144.1"/>
</dbReference>
<dbReference type="SMR" id="B4R8M0"/>
<dbReference type="STRING" id="450851.PHZ_c1233"/>
<dbReference type="KEGG" id="pzu:PHZ_c1233"/>
<dbReference type="eggNOG" id="COG0090">
    <property type="taxonomic scope" value="Bacteria"/>
</dbReference>
<dbReference type="HOGENOM" id="CLU_036235_2_1_5"/>
<dbReference type="OrthoDB" id="9778722at2"/>
<dbReference type="Proteomes" id="UP000001868">
    <property type="component" value="Chromosome"/>
</dbReference>
<dbReference type="GO" id="GO:0015934">
    <property type="term" value="C:large ribosomal subunit"/>
    <property type="evidence" value="ECO:0007669"/>
    <property type="project" value="InterPro"/>
</dbReference>
<dbReference type="GO" id="GO:0019843">
    <property type="term" value="F:rRNA binding"/>
    <property type="evidence" value="ECO:0007669"/>
    <property type="project" value="UniProtKB-UniRule"/>
</dbReference>
<dbReference type="GO" id="GO:0003735">
    <property type="term" value="F:structural constituent of ribosome"/>
    <property type="evidence" value="ECO:0007669"/>
    <property type="project" value="InterPro"/>
</dbReference>
<dbReference type="GO" id="GO:0016740">
    <property type="term" value="F:transferase activity"/>
    <property type="evidence" value="ECO:0007669"/>
    <property type="project" value="InterPro"/>
</dbReference>
<dbReference type="GO" id="GO:0002181">
    <property type="term" value="P:cytoplasmic translation"/>
    <property type="evidence" value="ECO:0007669"/>
    <property type="project" value="TreeGrafter"/>
</dbReference>
<dbReference type="FunFam" id="2.30.30.30:FF:000001">
    <property type="entry name" value="50S ribosomal protein L2"/>
    <property type="match status" value="1"/>
</dbReference>
<dbReference type="FunFam" id="2.40.50.140:FF:000003">
    <property type="entry name" value="50S ribosomal protein L2"/>
    <property type="match status" value="1"/>
</dbReference>
<dbReference type="FunFam" id="4.10.950.10:FF:000001">
    <property type="entry name" value="50S ribosomal protein L2"/>
    <property type="match status" value="1"/>
</dbReference>
<dbReference type="Gene3D" id="2.30.30.30">
    <property type="match status" value="1"/>
</dbReference>
<dbReference type="Gene3D" id="2.40.50.140">
    <property type="entry name" value="Nucleic acid-binding proteins"/>
    <property type="match status" value="1"/>
</dbReference>
<dbReference type="Gene3D" id="4.10.950.10">
    <property type="entry name" value="Ribosomal protein L2, domain 3"/>
    <property type="match status" value="1"/>
</dbReference>
<dbReference type="HAMAP" id="MF_01320_B">
    <property type="entry name" value="Ribosomal_uL2_B"/>
    <property type="match status" value="1"/>
</dbReference>
<dbReference type="InterPro" id="IPR012340">
    <property type="entry name" value="NA-bd_OB-fold"/>
</dbReference>
<dbReference type="InterPro" id="IPR014722">
    <property type="entry name" value="Rib_uL2_dom2"/>
</dbReference>
<dbReference type="InterPro" id="IPR002171">
    <property type="entry name" value="Ribosomal_uL2"/>
</dbReference>
<dbReference type="InterPro" id="IPR005880">
    <property type="entry name" value="Ribosomal_uL2_bac/org-type"/>
</dbReference>
<dbReference type="InterPro" id="IPR022669">
    <property type="entry name" value="Ribosomal_uL2_C"/>
</dbReference>
<dbReference type="InterPro" id="IPR022671">
    <property type="entry name" value="Ribosomal_uL2_CS"/>
</dbReference>
<dbReference type="InterPro" id="IPR014726">
    <property type="entry name" value="Ribosomal_uL2_dom3"/>
</dbReference>
<dbReference type="InterPro" id="IPR022666">
    <property type="entry name" value="Ribosomal_uL2_RNA-bd_dom"/>
</dbReference>
<dbReference type="InterPro" id="IPR008991">
    <property type="entry name" value="Translation_prot_SH3-like_sf"/>
</dbReference>
<dbReference type="NCBIfam" id="TIGR01171">
    <property type="entry name" value="rplB_bact"/>
    <property type="match status" value="1"/>
</dbReference>
<dbReference type="PANTHER" id="PTHR13691:SF5">
    <property type="entry name" value="LARGE RIBOSOMAL SUBUNIT PROTEIN UL2M"/>
    <property type="match status" value="1"/>
</dbReference>
<dbReference type="PANTHER" id="PTHR13691">
    <property type="entry name" value="RIBOSOMAL PROTEIN L2"/>
    <property type="match status" value="1"/>
</dbReference>
<dbReference type="Pfam" id="PF00181">
    <property type="entry name" value="Ribosomal_L2"/>
    <property type="match status" value="1"/>
</dbReference>
<dbReference type="Pfam" id="PF03947">
    <property type="entry name" value="Ribosomal_L2_C"/>
    <property type="match status" value="1"/>
</dbReference>
<dbReference type="PIRSF" id="PIRSF002158">
    <property type="entry name" value="Ribosomal_L2"/>
    <property type="match status" value="1"/>
</dbReference>
<dbReference type="SMART" id="SM01383">
    <property type="entry name" value="Ribosomal_L2"/>
    <property type="match status" value="1"/>
</dbReference>
<dbReference type="SMART" id="SM01382">
    <property type="entry name" value="Ribosomal_L2_C"/>
    <property type="match status" value="1"/>
</dbReference>
<dbReference type="SUPFAM" id="SSF50249">
    <property type="entry name" value="Nucleic acid-binding proteins"/>
    <property type="match status" value="1"/>
</dbReference>
<dbReference type="SUPFAM" id="SSF50104">
    <property type="entry name" value="Translation proteins SH3-like domain"/>
    <property type="match status" value="1"/>
</dbReference>
<dbReference type="PROSITE" id="PS00467">
    <property type="entry name" value="RIBOSOMAL_L2"/>
    <property type="match status" value="1"/>
</dbReference>
<proteinExistence type="inferred from homology"/>
<feature type="chain" id="PRO_1000141592" description="Large ribosomal subunit protein uL2">
    <location>
        <begin position="1"/>
        <end position="278"/>
    </location>
</feature>
<feature type="region of interest" description="Disordered" evidence="2">
    <location>
        <begin position="222"/>
        <end position="264"/>
    </location>
</feature>
<gene>
    <name evidence="1" type="primary">rplB</name>
    <name type="ordered locus">PHZ_c1233</name>
</gene>
<comment type="function">
    <text evidence="1">One of the primary rRNA binding proteins. Required for association of the 30S and 50S subunits to form the 70S ribosome, for tRNA binding and peptide bond formation. It has been suggested to have peptidyltransferase activity; this is somewhat controversial. Makes several contacts with the 16S rRNA in the 70S ribosome.</text>
</comment>
<comment type="subunit">
    <text evidence="1">Part of the 50S ribosomal subunit. Forms a bridge to the 30S subunit in the 70S ribosome.</text>
</comment>
<comment type="similarity">
    <text evidence="1">Belongs to the universal ribosomal protein uL2 family.</text>
</comment>
<keyword id="KW-1185">Reference proteome</keyword>
<keyword id="KW-0687">Ribonucleoprotein</keyword>
<keyword id="KW-0689">Ribosomal protein</keyword>
<keyword id="KW-0694">RNA-binding</keyword>
<keyword id="KW-0699">rRNA-binding</keyword>
<sequence>MALKQFNPTSPGRRQLVLVDKSELHKGRPEKSLVEGLTKSGGRGGNGRISVRFRGGGAKRLYRVIDFKRRKFDVPATVERLEYDPNRSAFIALVKYEDGELAYILAPQRLKVGDQVIAAEKADVKPGNAMPLRGMPIGTIIHNVELKPLKGGQIARSAGTYAQLVGRDAGYAQIRLNSGELRMVQDGCMATVGAVSNPDHMNESLGKAGRSRHKGRRPHVRGVAMNPIDHPHGGGEGRTSGGRHPVTPWGKPTKGRKTRKNKATDKFIIRSRHARKAR</sequence>
<name>RL2_PHEZH</name>
<organism>
    <name type="scientific">Phenylobacterium zucineum (strain HLK1)</name>
    <dbReference type="NCBI Taxonomy" id="450851"/>
    <lineage>
        <taxon>Bacteria</taxon>
        <taxon>Pseudomonadati</taxon>
        <taxon>Pseudomonadota</taxon>
        <taxon>Alphaproteobacteria</taxon>
        <taxon>Caulobacterales</taxon>
        <taxon>Caulobacteraceae</taxon>
        <taxon>Phenylobacterium</taxon>
    </lineage>
</organism>
<protein>
    <recommendedName>
        <fullName evidence="1">Large ribosomal subunit protein uL2</fullName>
    </recommendedName>
    <alternativeName>
        <fullName evidence="3">50S ribosomal protein L2</fullName>
    </alternativeName>
</protein>
<accession>B4R8M0</accession>